<comment type="function">
    <text evidence="1">Catalyzes the isomerization between 2-isopropylmalate and 3-isopropylmalate, via the formation of 2-isopropylmaleate.</text>
</comment>
<comment type="catalytic activity">
    <reaction evidence="1">
        <text>(2R,3S)-3-isopropylmalate = (2S)-2-isopropylmalate</text>
        <dbReference type="Rhea" id="RHEA:32287"/>
        <dbReference type="ChEBI" id="CHEBI:1178"/>
        <dbReference type="ChEBI" id="CHEBI:35121"/>
        <dbReference type="EC" id="4.2.1.33"/>
    </reaction>
</comment>
<comment type="cofactor">
    <cofactor evidence="1">
        <name>[4Fe-4S] cluster</name>
        <dbReference type="ChEBI" id="CHEBI:49883"/>
    </cofactor>
    <text evidence="1">Binds 1 [4Fe-4S] cluster per subunit.</text>
</comment>
<comment type="pathway">
    <text evidence="1">Amino-acid biosynthesis; L-leucine biosynthesis; L-leucine from 3-methyl-2-oxobutanoate: step 2/4.</text>
</comment>
<comment type="subunit">
    <text evidence="1">Heterodimer of LeuC and LeuD.</text>
</comment>
<comment type="similarity">
    <text evidence="1">Belongs to the aconitase/IPM isomerase family. LeuC type 2 subfamily.</text>
</comment>
<dbReference type="EC" id="4.2.1.33" evidence="1"/>
<dbReference type="EMBL" id="BA000001">
    <property type="protein sequence ID" value="BAA30840.1"/>
    <property type="molecule type" value="Genomic_DNA"/>
</dbReference>
<dbReference type="PIR" id="A71181">
    <property type="entry name" value="A71181"/>
</dbReference>
<dbReference type="RefSeq" id="WP_010885789.1">
    <property type="nucleotide sequence ID" value="NC_000961.1"/>
</dbReference>
<dbReference type="SMR" id="O59391"/>
<dbReference type="STRING" id="70601.gene:9378722"/>
<dbReference type="EnsemblBacteria" id="BAA30840">
    <property type="protein sequence ID" value="BAA30840"/>
    <property type="gene ID" value="BAA30840"/>
</dbReference>
<dbReference type="GeneID" id="1442570"/>
<dbReference type="KEGG" id="pho:PH1726"/>
<dbReference type="eggNOG" id="arCOG01698">
    <property type="taxonomic scope" value="Archaea"/>
</dbReference>
<dbReference type="OrthoDB" id="255at2157"/>
<dbReference type="UniPathway" id="UPA00048">
    <property type="reaction ID" value="UER00071"/>
</dbReference>
<dbReference type="Proteomes" id="UP000000752">
    <property type="component" value="Chromosome"/>
</dbReference>
<dbReference type="GO" id="GO:0003861">
    <property type="term" value="F:3-isopropylmalate dehydratase activity"/>
    <property type="evidence" value="ECO:0007669"/>
    <property type="project" value="UniProtKB-UniRule"/>
</dbReference>
<dbReference type="GO" id="GO:0051539">
    <property type="term" value="F:4 iron, 4 sulfur cluster binding"/>
    <property type="evidence" value="ECO:0007669"/>
    <property type="project" value="UniProtKB-KW"/>
</dbReference>
<dbReference type="GO" id="GO:0046872">
    <property type="term" value="F:metal ion binding"/>
    <property type="evidence" value="ECO:0007669"/>
    <property type="project" value="UniProtKB-KW"/>
</dbReference>
<dbReference type="GO" id="GO:0009098">
    <property type="term" value="P:L-leucine biosynthetic process"/>
    <property type="evidence" value="ECO:0007669"/>
    <property type="project" value="UniProtKB-UniRule"/>
</dbReference>
<dbReference type="Gene3D" id="3.30.499.10">
    <property type="entry name" value="Aconitase, domain 3"/>
    <property type="match status" value="2"/>
</dbReference>
<dbReference type="HAMAP" id="MF_01027">
    <property type="entry name" value="LeuC_type2"/>
    <property type="match status" value="1"/>
</dbReference>
<dbReference type="InterPro" id="IPR015931">
    <property type="entry name" value="Acnase/IPM_dHydase_lsu_aba_1/3"/>
</dbReference>
<dbReference type="InterPro" id="IPR001030">
    <property type="entry name" value="Acoase/IPM_deHydtase_lsu_aba"/>
</dbReference>
<dbReference type="InterPro" id="IPR018136">
    <property type="entry name" value="Aconitase_4Fe-4S_BS"/>
</dbReference>
<dbReference type="InterPro" id="IPR036008">
    <property type="entry name" value="Aconitase_4Fe-4S_dom"/>
</dbReference>
<dbReference type="InterPro" id="IPR011826">
    <property type="entry name" value="HAcnase/IPMdehydase_lsu_prok"/>
</dbReference>
<dbReference type="InterPro" id="IPR050067">
    <property type="entry name" value="IPM_dehydratase_rel_enz"/>
</dbReference>
<dbReference type="NCBIfam" id="TIGR02086">
    <property type="entry name" value="IPMI_arch"/>
    <property type="match status" value="1"/>
</dbReference>
<dbReference type="NCBIfam" id="NF001614">
    <property type="entry name" value="PRK00402.1"/>
    <property type="match status" value="1"/>
</dbReference>
<dbReference type="PANTHER" id="PTHR43822:SF2">
    <property type="entry name" value="HOMOACONITASE, MITOCHONDRIAL"/>
    <property type="match status" value="1"/>
</dbReference>
<dbReference type="PANTHER" id="PTHR43822">
    <property type="entry name" value="HOMOACONITASE, MITOCHONDRIAL-RELATED"/>
    <property type="match status" value="1"/>
</dbReference>
<dbReference type="Pfam" id="PF00330">
    <property type="entry name" value="Aconitase"/>
    <property type="match status" value="2"/>
</dbReference>
<dbReference type="PRINTS" id="PR00415">
    <property type="entry name" value="ACONITASE"/>
</dbReference>
<dbReference type="SUPFAM" id="SSF53732">
    <property type="entry name" value="Aconitase iron-sulfur domain"/>
    <property type="match status" value="1"/>
</dbReference>
<dbReference type="PROSITE" id="PS00450">
    <property type="entry name" value="ACONITASE_1"/>
    <property type="match status" value="1"/>
</dbReference>
<dbReference type="PROSITE" id="PS01244">
    <property type="entry name" value="ACONITASE_2"/>
    <property type="match status" value="1"/>
</dbReference>
<protein>
    <recommendedName>
        <fullName evidence="1">3-isopropylmalate dehydratase large subunit</fullName>
        <ecNumber evidence="1">4.2.1.33</ecNumber>
    </recommendedName>
    <alternativeName>
        <fullName evidence="1">Alpha-IPM isomerase</fullName>
        <shortName evidence="1">IPMI</shortName>
    </alternativeName>
    <alternativeName>
        <fullName evidence="1">Isopropylmalate isomerase</fullName>
    </alternativeName>
</protein>
<keyword id="KW-0004">4Fe-4S</keyword>
<keyword id="KW-0028">Amino-acid biosynthesis</keyword>
<keyword id="KW-0100">Branched-chain amino acid biosynthesis</keyword>
<keyword id="KW-0408">Iron</keyword>
<keyword id="KW-0411">Iron-sulfur</keyword>
<keyword id="KW-0432">Leucine biosynthesis</keyword>
<keyword id="KW-0456">Lyase</keyword>
<keyword id="KW-0479">Metal-binding</keyword>
<name>LEUC_PYRHO</name>
<accession>O59391</accession>
<reference key="1">
    <citation type="journal article" date="1998" name="DNA Res.">
        <title>Complete sequence and gene organization of the genome of a hyper-thermophilic archaebacterium, Pyrococcus horikoshii OT3.</title>
        <authorList>
            <person name="Kawarabayasi Y."/>
            <person name="Sawada M."/>
            <person name="Horikawa H."/>
            <person name="Haikawa Y."/>
            <person name="Hino Y."/>
            <person name="Yamamoto S."/>
            <person name="Sekine M."/>
            <person name="Baba S."/>
            <person name="Kosugi H."/>
            <person name="Hosoyama A."/>
            <person name="Nagai Y."/>
            <person name="Sakai M."/>
            <person name="Ogura K."/>
            <person name="Otsuka R."/>
            <person name="Nakazawa H."/>
            <person name="Takamiya M."/>
            <person name="Ohfuku Y."/>
            <person name="Funahashi T."/>
            <person name="Tanaka T."/>
            <person name="Kudoh Y."/>
            <person name="Yamazaki J."/>
            <person name="Kushida N."/>
            <person name="Oguchi A."/>
            <person name="Aoki K."/>
            <person name="Yoshizawa T."/>
            <person name="Nakamura Y."/>
            <person name="Robb F.T."/>
            <person name="Horikoshi K."/>
            <person name="Masuchi Y."/>
            <person name="Shizuya H."/>
            <person name="Kikuchi H."/>
        </authorList>
    </citation>
    <scope>NUCLEOTIDE SEQUENCE [LARGE SCALE GENOMIC DNA]</scope>
    <source>
        <strain>ATCC 700860 / DSM 12428 / JCM 9974 / NBRC 100139 / OT-3</strain>
    </source>
</reference>
<feature type="chain" id="PRO_0000076882" description="3-isopropylmalate dehydratase large subunit">
    <location>
        <begin position="1"/>
        <end position="380"/>
    </location>
</feature>
<feature type="binding site" evidence="1">
    <location>
        <position position="262"/>
    </location>
    <ligand>
        <name>[4Fe-4S] cluster</name>
        <dbReference type="ChEBI" id="CHEBI:49883"/>
    </ligand>
</feature>
<feature type="binding site" evidence="1">
    <location>
        <position position="320"/>
    </location>
    <ligand>
        <name>[4Fe-4S] cluster</name>
        <dbReference type="ChEBI" id="CHEBI:49883"/>
    </ligand>
</feature>
<feature type="binding site" evidence="1">
    <location>
        <position position="323"/>
    </location>
    <ligand>
        <name>[4Fe-4S] cluster</name>
        <dbReference type="ChEBI" id="CHEBI:49883"/>
    </ligand>
</feature>
<organism>
    <name type="scientific">Pyrococcus horikoshii (strain ATCC 700860 / DSM 12428 / JCM 9974 / NBRC 100139 / OT-3)</name>
    <dbReference type="NCBI Taxonomy" id="70601"/>
    <lineage>
        <taxon>Archaea</taxon>
        <taxon>Methanobacteriati</taxon>
        <taxon>Methanobacteriota</taxon>
        <taxon>Thermococci</taxon>
        <taxon>Thermococcales</taxon>
        <taxon>Thermococcaceae</taxon>
        <taxon>Pyrococcus</taxon>
    </lineage>
</organism>
<proteinExistence type="inferred from homology"/>
<evidence type="ECO:0000255" key="1">
    <source>
        <dbReference type="HAMAP-Rule" id="MF_01027"/>
    </source>
</evidence>
<sequence>MTLVEEILDAKAGEVVIRNVDLVYAHDGTMPLIIEAFNKVFNSVKARAYVFFDHVYPAPTVKVANLQKEIREFARRHGIPVVEGKGISHQLVVEMGLAEKSRIVVGGDSHTPTLGALGVFAVGMGATDVAVVLGLGKTWLRVPESVAVIFEGKPSRTTMAADVMIRLITSLRNYDMNYKALEFFNVPFTADERLTLTNFSVEANAKTALIGEEYDGRNYIKEISFELSSLGPMVAKPFSPANGVEVEKVEGTKIDQVFIGSCTNGRFEHIKRAAEILKGEEVAVRTIIGPASVNVYKRMVREGIVDILLDAGATILPPGCGPCLGRHMGVLGDKEVVLSTTNRNFRGRMGSPTAEIYLASPLTAAVSALYGEITSPGGEV</sequence>
<gene>
    <name evidence="1" type="primary">leuC</name>
    <name type="ordered locus">PH1726</name>
</gene>